<keyword id="KW-0489">Methyltransferase</keyword>
<keyword id="KW-0949">S-adenosyl-L-methionine</keyword>
<keyword id="KW-0808">Transferase</keyword>
<name>Y4444_MYCA1</name>
<sequence length="304" mass="33137">MTRTHDDEWDLASSVGATATMVAAGRAMATKDPRGLIDDPFAEPLVRAVGVDFFTKMMDGELDLDAIENATPVRIQSMVDGMAVRTKYFDDYFVDATDAGVRQVVILASGLDSRAYRLPWPAGTVVYEIDQPRVIEFKSNTLAEVGAEPTATRRTIPIDLRGDWPAALSAAGFDPAAPTAWLAEGLLIYLPPEAQDRLFDNITALSAPGSTIATEFVPGIVDFDAERVREMSGSFREHGVDIDMASLVYAGERNHVIDYLNGLGWRAEGVTRTELFHRHGIEVPAPEHDDPLGEIIFISATRTG</sequence>
<reference key="1">
    <citation type="submission" date="2006-10" db="EMBL/GenBank/DDBJ databases">
        <authorList>
            <person name="Fleischmann R.D."/>
            <person name="Dodson R.J."/>
            <person name="Haft D.H."/>
            <person name="Merkel J.S."/>
            <person name="Nelson W.C."/>
            <person name="Fraser C.M."/>
        </authorList>
    </citation>
    <scope>NUCLEOTIDE SEQUENCE [LARGE SCALE GENOMIC DNA]</scope>
    <source>
        <strain>104</strain>
    </source>
</reference>
<organism>
    <name type="scientific">Mycobacterium avium (strain 104)</name>
    <dbReference type="NCBI Taxonomy" id="243243"/>
    <lineage>
        <taxon>Bacteria</taxon>
        <taxon>Bacillati</taxon>
        <taxon>Actinomycetota</taxon>
        <taxon>Actinomycetes</taxon>
        <taxon>Mycobacteriales</taxon>
        <taxon>Mycobacteriaceae</taxon>
        <taxon>Mycobacterium</taxon>
        <taxon>Mycobacterium avium complex (MAC)</taxon>
    </lineage>
</organism>
<comment type="function">
    <text evidence="1">Exhibits S-adenosyl-L-methionine-dependent methyltransferase activity.</text>
</comment>
<comment type="similarity">
    <text evidence="2">Belongs to the UPF0677 family.</text>
</comment>
<gene>
    <name type="ordered locus">MAV_4444</name>
</gene>
<protein>
    <recommendedName>
        <fullName>Putative S-adenosyl-L-methionine-dependent methyltransferase MAV_4444</fullName>
        <ecNumber>2.1.1.-</ecNumber>
    </recommendedName>
</protein>
<evidence type="ECO:0000250" key="1"/>
<evidence type="ECO:0000305" key="2"/>
<accession>A0QKZ0</accession>
<proteinExistence type="inferred from homology"/>
<dbReference type="EC" id="2.1.1.-"/>
<dbReference type="EMBL" id="CP000479">
    <property type="protein sequence ID" value="ABK66429.1"/>
    <property type="molecule type" value="Genomic_DNA"/>
</dbReference>
<dbReference type="RefSeq" id="WP_011726070.1">
    <property type="nucleotide sequence ID" value="NC_008595.1"/>
</dbReference>
<dbReference type="SMR" id="A0QKZ0"/>
<dbReference type="KEGG" id="mav:MAV_4444"/>
<dbReference type="HOGENOM" id="CLU_056160_2_1_11"/>
<dbReference type="Proteomes" id="UP000001574">
    <property type="component" value="Chromosome"/>
</dbReference>
<dbReference type="GO" id="GO:0008168">
    <property type="term" value="F:methyltransferase activity"/>
    <property type="evidence" value="ECO:0007669"/>
    <property type="project" value="UniProtKB-KW"/>
</dbReference>
<dbReference type="GO" id="GO:0032259">
    <property type="term" value="P:methylation"/>
    <property type="evidence" value="ECO:0007669"/>
    <property type="project" value="UniProtKB-KW"/>
</dbReference>
<dbReference type="FunFam" id="3.40.50.150:FF:000152">
    <property type="entry name" value="S-adenosyl-L-methionine-dependent methyltransferase"/>
    <property type="match status" value="1"/>
</dbReference>
<dbReference type="Gene3D" id="3.40.50.150">
    <property type="entry name" value="Vaccinia Virus protein VP39"/>
    <property type="match status" value="1"/>
</dbReference>
<dbReference type="InterPro" id="IPR007213">
    <property type="entry name" value="Ppm1/Ppm2/Tcmp"/>
</dbReference>
<dbReference type="InterPro" id="IPR029063">
    <property type="entry name" value="SAM-dependent_MTases_sf"/>
</dbReference>
<dbReference type="InterPro" id="IPR011610">
    <property type="entry name" value="SAM_mthyl_Trfase_ML2640-like"/>
</dbReference>
<dbReference type="NCBIfam" id="TIGR00027">
    <property type="entry name" value="mthyl_TIGR00027"/>
    <property type="match status" value="1"/>
</dbReference>
<dbReference type="PANTHER" id="PTHR43619">
    <property type="entry name" value="S-ADENOSYL-L-METHIONINE-DEPENDENT METHYLTRANSFERASE YKTD-RELATED"/>
    <property type="match status" value="1"/>
</dbReference>
<dbReference type="PANTHER" id="PTHR43619:SF2">
    <property type="entry name" value="S-ADENOSYL-L-METHIONINE-DEPENDENT METHYLTRANSFERASES SUPERFAMILY PROTEIN"/>
    <property type="match status" value="1"/>
</dbReference>
<dbReference type="Pfam" id="PF04072">
    <property type="entry name" value="LCM"/>
    <property type="match status" value="1"/>
</dbReference>
<dbReference type="SUPFAM" id="SSF53335">
    <property type="entry name" value="S-adenosyl-L-methionine-dependent methyltransferases"/>
    <property type="match status" value="1"/>
</dbReference>
<feature type="chain" id="PRO_0000361110" description="Putative S-adenosyl-L-methionine-dependent methyltransferase MAV_4444">
    <location>
        <begin position="1"/>
        <end position="304"/>
    </location>
</feature>
<feature type="binding site" evidence="1">
    <location>
        <position position="130"/>
    </location>
    <ligand>
        <name>S-adenosyl-L-methionine</name>
        <dbReference type="ChEBI" id="CHEBI:59789"/>
    </ligand>
</feature>
<feature type="binding site" evidence="1">
    <location>
        <begin position="159"/>
        <end position="160"/>
    </location>
    <ligand>
        <name>S-adenosyl-L-methionine</name>
        <dbReference type="ChEBI" id="CHEBI:59789"/>
    </ligand>
</feature>